<keyword id="KW-0221">Differentiation</keyword>
<keyword id="KW-0472">Membrane</keyword>
<keyword id="KW-1267">Proteomics identification</keyword>
<keyword id="KW-1185">Reference proteome</keyword>
<keyword id="KW-0744">Spermatogenesis</keyword>
<keyword id="KW-0812">Transmembrane</keyword>
<keyword id="KW-1133">Transmembrane helix</keyword>
<accession>Q6ZUB0</accession>
<accession>A0A0J9YX51</accession>
<comment type="function">
    <text evidence="1">May play a role in spermatogenesis.</text>
</comment>
<comment type="subcellular location">
    <subcellularLocation>
        <location evidence="4">Membrane</location>
        <topology evidence="4">Single-pass membrane protein</topology>
    </subcellularLocation>
</comment>
<comment type="similarity">
    <text evidence="4">Belongs to the SPATA31 family.</text>
</comment>
<organism>
    <name type="scientific">Homo sapiens</name>
    <name type="common">Human</name>
    <dbReference type="NCBI Taxonomy" id="9606"/>
    <lineage>
        <taxon>Eukaryota</taxon>
        <taxon>Metazoa</taxon>
        <taxon>Chordata</taxon>
        <taxon>Craniata</taxon>
        <taxon>Vertebrata</taxon>
        <taxon>Euteleostomi</taxon>
        <taxon>Mammalia</taxon>
        <taxon>Eutheria</taxon>
        <taxon>Euarchontoglires</taxon>
        <taxon>Primates</taxon>
        <taxon>Haplorrhini</taxon>
        <taxon>Catarrhini</taxon>
        <taxon>Hominidae</taxon>
        <taxon>Homo</taxon>
    </lineage>
</organism>
<sequence>MENILCFLNSYTETGLSPDSHCLDIDLNFICLSGLGLFILYLFYMVLTLYSSPTEKNNDTQKHQGRARRKRKSVTFKDRKSLQKEAEEERKLHSFLKSFGPPVSCSPLGQHHDTTLFRRLLCPDPVCRVCNRATADIQRLLSWESLKDAAPSVSPLASSASGAESSFTLASTPSATTPEDLILSSRPKPSPPPPLILSPDLITTLADLFSPSPLRDPLPPQPVSPLDSKFPIDHSPPQQLPFPLLPPHHIERVEPSLQPEASLSLNTIFSFGSTLCQDISQAVNRTDSCARHHGPPTPSALPPEDCTVTQSKSNLTVLKTFPEMLSLGGSGGSSTSAPTTKGIDHSCPASSEFSWWQPHAKDSFSSNFVPSDFMEELLTLHSSEASLGGHSVANIIQPVNISFLSHDIPALLERQVKRRGDFLMWKENGKKPGSFPTQLRPNYQLNSSRNMLTSTAVKHDLAESFPFWASKGKLEWQHIHQQPPYSKCFEDHLEQKYVQLFWGLPSLHSESLHPTVFVQHGRSSMFVFFNGITNTSMSHESPVLPPPQPLFLPSTQPLPLPQTLPRGQSLHLTQVKSLAQPQSPFPALPPSPLFLIRVCGVCFHRPQNEARSLMPSEINHLEWNVLQKVQESVWGLPSVVQKSQEDFCPPAPNPVLVRKSFKVHVPISIIPGDFPLSSEVRKKLEQHIRKRLIQRRWGLPRRIHESLSLLRPQNKISELSVSESIHGPLNISLVEGQRCNVLKKSASSFPRSFHERSSNMLSMENVGNYQGCSQETAPKNHLLHDPETSSDEDLRSNSERDLGTHMMHLSGNDSGVRLGQKQLENALTVHLSKKFEEINEGRMPGTVHSSWHSVKQTICLPEKSHSQIKHRNLAALVSEDHGVDTSQEMSFLSSNKQKMLEAHIKSFHMKPILNLSI</sequence>
<proteinExistence type="evidence at protein level"/>
<reference key="1">
    <citation type="journal article" date="2004" name="Nat. Genet.">
        <title>Complete sequencing and characterization of 21,243 full-length human cDNAs.</title>
        <authorList>
            <person name="Ota T."/>
            <person name="Suzuki Y."/>
            <person name="Nishikawa T."/>
            <person name="Otsuki T."/>
            <person name="Sugiyama T."/>
            <person name="Irie R."/>
            <person name="Wakamatsu A."/>
            <person name="Hayashi K."/>
            <person name="Sato H."/>
            <person name="Nagai K."/>
            <person name="Kimura K."/>
            <person name="Makita H."/>
            <person name="Sekine M."/>
            <person name="Obayashi M."/>
            <person name="Nishi T."/>
            <person name="Shibahara T."/>
            <person name="Tanaka T."/>
            <person name="Ishii S."/>
            <person name="Yamamoto J."/>
            <person name="Saito K."/>
            <person name="Kawai Y."/>
            <person name="Isono Y."/>
            <person name="Nakamura Y."/>
            <person name="Nagahari K."/>
            <person name="Murakami K."/>
            <person name="Yasuda T."/>
            <person name="Iwayanagi T."/>
            <person name="Wagatsuma M."/>
            <person name="Shiratori A."/>
            <person name="Sudo H."/>
            <person name="Hosoiri T."/>
            <person name="Kaku Y."/>
            <person name="Kodaira H."/>
            <person name="Kondo H."/>
            <person name="Sugawara M."/>
            <person name="Takahashi M."/>
            <person name="Kanda K."/>
            <person name="Yokoi T."/>
            <person name="Furuya T."/>
            <person name="Kikkawa E."/>
            <person name="Omura Y."/>
            <person name="Abe K."/>
            <person name="Kamihara K."/>
            <person name="Katsuta N."/>
            <person name="Sato K."/>
            <person name="Tanikawa M."/>
            <person name="Yamazaki M."/>
            <person name="Ninomiya K."/>
            <person name="Ishibashi T."/>
            <person name="Yamashita H."/>
            <person name="Murakawa K."/>
            <person name="Fujimori K."/>
            <person name="Tanai H."/>
            <person name="Kimata M."/>
            <person name="Watanabe M."/>
            <person name="Hiraoka S."/>
            <person name="Chiba Y."/>
            <person name="Ishida S."/>
            <person name="Ono Y."/>
            <person name="Takiguchi S."/>
            <person name="Watanabe S."/>
            <person name="Yosida M."/>
            <person name="Hotuta T."/>
            <person name="Kusano J."/>
            <person name="Kanehori K."/>
            <person name="Takahashi-Fujii A."/>
            <person name="Hara H."/>
            <person name="Tanase T.-O."/>
            <person name="Nomura Y."/>
            <person name="Togiya S."/>
            <person name="Komai F."/>
            <person name="Hara R."/>
            <person name="Takeuchi K."/>
            <person name="Arita M."/>
            <person name="Imose N."/>
            <person name="Musashino K."/>
            <person name="Yuuki H."/>
            <person name="Oshima A."/>
            <person name="Sasaki N."/>
            <person name="Aotsuka S."/>
            <person name="Yoshikawa Y."/>
            <person name="Matsunawa H."/>
            <person name="Ichihara T."/>
            <person name="Shiohata N."/>
            <person name="Sano S."/>
            <person name="Moriya S."/>
            <person name="Momiyama H."/>
            <person name="Satoh N."/>
            <person name="Takami S."/>
            <person name="Terashima Y."/>
            <person name="Suzuki O."/>
            <person name="Nakagawa S."/>
            <person name="Senoh A."/>
            <person name="Mizoguchi H."/>
            <person name="Goto Y."/>
            <person name="Shimizu F."/>
            <person name="Wakebe H."/>
            <person name="Hishigaki H."/>
            <person name="Watanabe T."/>
            <person name="Sugiyama A."/>
            <person name="Takemoto M."/>
            <person name="Kawakami B."/>
            <person name="Yamazaki M."/>
            <person name="Watanabe K."/>
            <person name="Kumagai A."/>
            <person name="Itakura S."/>
            <person name="Fukuzumi Y."/>
            <person name="Fujimori Y."/>
            <person name="Komiyama M."/>
            <person name="Tashiro H."/>
            <person name="Tanigami A."/>
            <person name="Fujiwara T."/>
            <person name="Ono T."/>
            <person name="Yamada K."/>
            <person name="Fujii Y."/>
            <person name="Ozaki K."/>
            <person name="Hirao M."/>
            <person name="Ohmori Y."/>
            <person name="Kawabata A."/>
            <person name="Hikiji T."/>
            <person name="Kobatake N."/>
            <person name="Inagaki H."/>
            <person name="Ikema Y."/>
            <person name="Okamoto S."/>
            <person name="Okitani R."/>
            <person name="Kawakami T."/>
            <person name="Noguchi S."/>
            <person name="Itoh T."/>
            <person name="Shigeta K."/>
            <person name="Senba T."/>
            <person name="Matsumura K."/>
            <person name="Nakajima Y."/>
            <person name="Mizuno T."/>
            <person name="Morinaga M."/>
            <person name="Sasaki M."/>
            <person name="Togashi T."/>
            <person name="Oyama M."/>
            <person name="Hata H."/>
            <person name="Watanabe M."/>
            <person name="Komatsu T."/>
            <person name="Mizushima-Sugano J."/>
            <person name="Satoh T."/>
            <person name="Shirai Y."/>
            <person name="Takahashi Y."/>
            <person name="Nakagawa K."/>
            <person name="Okumura K."/>
            <person name="Nagase T."/>
            <person name="Nomura N."/>
            <person name="Kikuchi H."/>
            <person name="Masuho Y."/>
            <person name="Yamashita R."/>
            <person name="Nakai K."/>
            <person name="Yada T."/>
            <person name="Nakamura Y."/>
            <person name="Ohara O."/>
            <person name="Isogai T."/>
            <person name="Sugano S."/>
        </authorList>
    </citation>
    <scope>NUCLEOTIDE SEQUENCE [LARGE SCALE MRNA]</scope>
    <source>
        <tissue>Testis</tissue>
    </source>
</reference>
<reference key="2">
    <citation type="journal article" date="2004" name="Nature">
        <title>DNA sequence and analysis of human chromosome 9.</title>
        <authorList>
            <person name="Humphray S.J."/>
            <person name="Oliver K."/>
            <person name="Hunt A.R."/>
            <person name="Plumb R.W."/>
            <person name="Loveland J.E."/>
            <person name="Howe K.L."/>
            <person name="Andrews T.D."/>
            <person name="Searle S."/>
            <person name="Hunt S.E."/>
            <person name="Scott C.E."/>
            <person name="Jones M.C."/>
            <person name="Ainscough R."/>
            <person name="Almeida J.P."/>
            <person name="Ambrose K.D."/>
            <person name="Ashwell R.I.S."/>
            <person name="Babbage A.K."/>
            <person name="Babbage S."/>
            <person name="Bagguley C.L."/>
            <person name="Bailey J."/>
            <person name="Banerjee R."/>
            <person name="Barker D.J."/>
            <person name="Barlow K.F."/>
            <person name="Bates K."/>
            <person name="Beasley H."/>
            <person name="Beasley O."/>
            <person name="Bird C.P."/>
            <person name="Bray-Allen S."/>
            <person name="Brown A.J."/>
            <person name="Brown J.Y."/>
            <person name="Burford D."/>
            <person name="Burrill W."/>
            <person name="Burton J."/>
            <person name="Carder C."/>
            <person name="Carter N.P."/>
            <person name="Chapman J.C."/>
            <person name="Chen Y."/>
            <person name="Clarke G."/>
            <person name="Clark S.Y."/>
            <person name="Clee C.M."/>
            <person name="Clegg S."/>
            <person name="Collier R.E."/>
            <person name="Corby N."/>
            <person name="Crosier M."/>
            <person name="Cummings A.T."/>
            <person name="Davies J."/>
            <person name="Dhami P."/>
            <person name="Dunn M."/>
            <person name="Dutta I."/>
            <person name="Dyer L.W."/>
            <person name="Earthrowl M.E."/>
            <person name="Faulkner L."/>
            <person name="Fleming C.J."/>
            <person name="Frankish A."/>
            <person name="Frankland J.A."/>
            <person name="French L."/>
            <person name="Fricker D.G."/>
            <person name="Garner P."/>
            <person name="Garnett J."/>
            <person name="Ghori J."/>
            <person name="Gilbert J.G.R."/>
            <person name="Glison C."/>
            <person name="Grafham D.V."/>
            <person name="Gribble S."/>
            <person name="Griffiths C."/>
            <person name="Griffiths-Jones S."/>
            <person name="Grocock R."/>
            <person name="Guy J."/>
            <person name="Hall R.E."/>
            <person name="Hammond S."/>
            <person name="Harley J.L."/>
            <person name="Harrison E.S.I."/>
            <person name="Hart E.A."/>
            <person name="Heath P.D."/>
            <person name="Henderson C.D."/>
            <person name="Hopkins B.L."/>
            <person name="Howard P.J."/>
            <person name="Howden P.J."/>
            <person name="Huckle E."/>
            <person name="Johnson C."/>
            <person name="Johnson D."/>
            <person name="Joy A.A."/>
            <person name="Kay M."/>
            <person name="Keenan S."/>
            <person name="Kershaw J.K."/>
            <person name="Kimberley A.M."/>
            <person name="King A."/>
            <person name="Knights A."/>
            <person name="Laird G.K."/>
            <person name="Langford C."/>
            <person name="Lawlor S."/>
            <person name="Leongamornlert D.A."/>
            <person name="Leversha M."/>
            <person name="Lloyd C."/>
            <person name="Lloyd D.M."/>
            <person name="Lovell J."/>
            <person name="Martin S."/>
            <person name="Mashreghi-Mohammadi M."/>
            <person name="Matthews L."/>
            <person name="McLaren S."/>
            <person name="McLay K.E."/>
            <person name="McMurray A."/>
            <person name="Milne S."/>
            <person name="Nickerson T."/>
            <person name="Nisbett J."/>
            <person name="Nordsiek G."/>
            <person name="Pearce A.V."/>
            <person name="Peck A.I."/>
            <person name="Porter K.M."/>
            <person name="Pandian R."/>
            <person name="Pelan S."/>
            <person name="Phillimore B."/>
            <person name="Povey S."/>
            <person name="Ramsey Y."/>
            <person name="Rand V."/>
            <person name="Scharfe M."/>
            <person name="Sehra H.K."/>
            <person name="Shownkeen R."/>
            <person name="Sims S.K."/>
            <person name="Skuce C.D."/>
            <person name="Smith M."/>
            <person name="Steward C.A."/>
            <person name="Swarbreck D."/>
            <person name="Sycamore N."/>
            <person name="Tester J."/>
            <person name="Thorpe A."/>
            <person name="Tracey A."/>
            <person name="Tromans A."/>
            <person name="Thomas D.W."/>
            <person name="Wall M."/>
            <person name="Wallis J.M."/>
            <person name="West A.P."/>
            <person name="Whitehead S.L."/>
            <person name="Willey D.L."/>
            <person name="Williams S.A."/>
            <person name="Wilming L."/>
            <person name="Wray P.W."/>
            <person name="Young L."/>
            <person name="Ashurst J.L."/>
            <person name="Coulson A."/>
            <person name="Blocker H."/>
            <person name="Durbin R.M."/>
            <person name="Sulston J.E."/>
            <person name="Hubbard T."/>
            <person name="Jackson M.J."/>
            <person name="Bentley D.R."/>
            <person name="Beck S."/>
            <person name="Rogers J."/>
            <person name="Dunham I."/>
        </authorList>
    </citation>
    <scope>NUCLEOTIDE SEQUENCE [LARGE SCALE GENOMIC DNA]</scope>
</reference>
<evidence type="ECO:0000250" key="1"/>
<evidence type="ECO:0000255" key="2"/>
<evidence type="ECO:0000256" key="3">
    <source>
        <dbReference type="SAM" id="MobiDB-lite"/>
    </source>
</evidence>
<evidence type="ECO:0000305" key="4"/>
<gene>
    <name type="primary">SPATA31D4</name>
    <name type="synonym">FAM75D4</name>
</gene>
<protein>
    <recommendedName>
        <fullName>Spermatogenesis-associated protein 31D4</fullName>
    </recommendedName>
    <alternativeName>
        <fullName>Protein FAM75D4</fullName>
    </alternativeName>
</protein>
<name>S31D4_HUMAN</name>
<dbReference type="EMBL" id="AK125847">
    <property type="protein sequence ID" value="BAC86316.1"/>
    <property type="molecule type" value="mRNA"/>
</dbReference>
<dbReference type="EMBL" id="AL158154">
    <property type="status" value="NOT_ANNOTATED_CDS"/>
    <property type="molecule type" value="Genomic_DNA"/>
</dbReference>
<dbReference type="CCDS" id="CCDS83379.1"/>
<dbReference type="RefSeq" id="NP_001138669.1">
    <property type="nucleotide sequence ID" value="NM_001145197.1"/>
</dbReference>
<dbReference type="SMR" id="Q6ZUB0"/>
<dbReference type="BioGRID" id="133258">
    <property type="interactions" value="1"/>
</dbReference>
<dbReference type="FunCoup" id="Q6ZUB0">
    <property type="interactions" value="9"/>
</dbReference>
<dbReference type="IntAct" id="Q6ZUB0">
    <property type="interactions" value="1"/>
</dbReference>
<dbReference type="MINT" id="Q6ZUB0"/>
<dbReference type="STRING" id="9606.ENSP00000488251"/>
<dbReference type="GlyGen" id="Q6ZUB0">
    <property type="glycosylation" value="1 site"/>
</dbReference>
<dbReference type="iPTMnet" id="Q6ZUB0"/>
<dbReference type="PhosphoSitePlus" id="Q6ZUB0"/>
<dbReference type="BioMuta" id="SPATA31D4"/>
<dbReference type="DMDM" id="74711931"/>
<dbReference type="jPOST" id="Q6ZUB0"/>
<dbReference type="MassIVE" id="Q6ZUB0"/>
<dbReference type="PeptideAtlas" id="Q6ZUB0"/>
<dbReference type="ProteomicsDB" id="68325"/>
<dbReference type="DNASU" id="389761"/>
<dbReference type="Ensembl" id="ENST00000419782.5">
    <property type="protein sequence ID" value="ENSP00000488251.1"/>
    <property type="gene ID" value="ENSG00000189357.9"/>
</dbReference>
<dbReference type="GeneID" id="389761"/>
<dbReference type="KEGG" id="hsa:389761"/>
<dbReference type="MANE-Select" id="ENST00000419782.5">
    <property type="protein sequence ID" value="ENSP00000488251.1"/>
    <property type="RefSeq nucleotide sequence ID" value="NM_001145197.1"/>
    <property type="RefSeq protein sequence ID" value="NP_001138669.1"/>
</dbReference>
<dbReference type="AGR" id="HGNC:38601"/>
<dbReference type="CTD" id="389761"/>
<dbReference type="GeneCards" id="SPATA31D4"/>
<dbReference type="HGNC" id="HGNC:38601">
    <property type="gene designation" value="SPATA31D4"/>
</dbReference>
<dbReference type="HPA" id="ENSG00000189357">
    <property type="expression patterns" value="Tissue enriched (testis)"/>
</dbReference>
<dbReference type="neXtProt" id="NX_Q6ZUB0"/>
<dbReference type="OpenTargets" id="ENSG00000189357"/>
<dbReference type="VEuPathDB" id="HostDB:ENSG00000189357"/>
<dbReference type="GeneTree" id="ENSGT00950000183043"/>
<dbReference type="InParanoid" id="Q6ZUB0"/>
<dbReference type="OMA" id="HCLEYNI"/>
<dbReference type="OrthoDB" id="9538932at2759"/>
<dbReference type="PAN-GO" id="Q6ZUB0">
    <property type="GO annotations" value="0 GO annotations based on evolutionary models"/>
</dbReference>
<dbReference type="PathwayCommons" id="Q6ZUB0"/>
<dbReference type="BioGRID-ORCS" id="389761">
    <property type="hits" value="8 hits in 207 CRISPR screens"/>
</dbReference>
<dbReference type="GenomeRNAi" id="389761"/>
<dbReference type="Pharos" id="Q6ZUB0">
    <property type="development level" value="Tdark"/>
</dbReference>
<dbReference type="PRO" id="PR:Q6ZUB0"/>
<dbReference type="Proteomes" id="UP000005640">
    <property type="component" value="Chromosome 9"/>
</dbReference>
<dbReference type="RNAct" id="Q6ZUB0">
    <property type="molecule type" value="protein"/>
</dbReference>
<dbReference type="Bgee" id="ENSG00000189357">
    <property type="expression patterns" value="Expressed in male germ line stem cell (sensu Vertebrata) in testis and 4 other cell types or tissues"/>
</dbReference>
<dbReference type="GO" id="GO:0016020">
    <property type="term" value="C:membrane"/>
    <property type="evidence" value="ECO:0007669"/>
    <property type="project" value="UniProtKB-SubCell"/>
</dbReference>
<dbReference type="GO" id="GO:0030154">
    <property type="term" value="P:cell differentiation"/>
    <property type="evidence" value="ECO:0007669"/>
    <property type="project" value="UniProtKB-KW"/>
</dbReference>
<dbReference type="GO" id="GO:0007283">
    <property type="term" value="P:spermatogenesis"/>
    <property type="evidence" value="ECO:0007669"/>
    <property type="project" value="UniProtKB-KW"/>
</dbReference>
<dbReference type="InterPro" id="IPR039509">
    <property type="entry name" value="SPATA31"/>
</dbReference>
<dbReference type="InterPro" id="IPR027970">
    <property type="entry name" value="SPATA31F3-like"/>
</dbReference>
<dbReference type="PANTHER" id="PTHR21859">
    <property type="entry name" value="ACROSOME-SPECIFIC PROTEIN"/>
    <property type="match status" value="1"/>
</dbReference>
<dbReference type="PANTHER" id="PTHR21859:SF50">
    <property type="entry name" value="SPERMATOGENESIS-ASSOCIATED PROTEIN 31D3-RELATED"/>
    <property type="match status" value="1"/>
</dbReference>
<dbReference type="Pfam" id="PF15371">
    <property type="entry name" value="DUF4599"/>
    <property type="match status" value="1"/>
</dbReference>
<dbReference type="Pfam" id="PF14650">
    <property type="entry name" value="FAM75"/>
    <property type="match status" value="1"/>
</dbReference>
<feature type="chain" id="PRO_0000332289" description="Spermatogenesis-associated protein 31D4">
    <location>
        <begin position="1"/>
        <end position="917"/>
    </location>
</feature>
<feature type="transmembrane region" description="Helical" evidence="2">
    <location>
        <begin position="29"/>
        <end position="49"/>
    </location>
</feature>
<feature type="region of interest" description="Disordered" evidence="3">
    <location>
        <begin position="55"/>
        <end position="80"/>
    </location>
</feature>
<feature type="region of interest" description="Disordered" evidence="3">
    <location>
        <begin position="152"/>
        <end position="195"/>
    </location>
</feature>
<feature type="region of interest" description="Disordered" evidence="3">
    <location>
        <begin position="773"/>
        <end position="798"/>
    </location>
</feature>
<feature type="compositionally biased region" description="Basic residues" evidence="3">
    <location>
        <begin position="63"/>
        <end position="74"/>
    </location>
</feature>
<feature type="compositionally biased region" description="Low complexity" evidence="3">
    <location>
        <begin position="152"/>
        <end position="163"/>
    </location>
</feature>
<feature type="compositionally biased region" description="Polar residues" evidence="3">
    <location>
        <begin position="164"/>
        <end position="177"/>
    </location>
</feature>
<feature type="compositionally biased region" description="Basic and acidic residues" evidence="3">
    <location>
        <begin position="782"/>
        <end position="798"/>
    </location>
</feature>
<feature type="sequence conflict" description="In Ref. 1; BAC86316." ref="1">
    <original>G</original>
    <variation>V</variation>
    <location>
        <position position="15"/>
    </location>
</feature>
<feature type="sequence conflict" description="In Ref. 1; BAC86316." ref="1">
    <original>K</original>
    <variation>R</variation>
    <location>
        <position position="690"/>
    </location>
</feature>
<feature type="sequence conflict" description="In Ref. 1; BAC86316." ref="1">
    <original>D</original>
    <variation>E</variation>
    <location>
        <position position="791"/>
    </location>
</feature>